<protein>
    <recommendedName>
        <fullName evidence="1">Large ribosomal subunit protein bL25</fullName>
    </recommendedName>
    <alternativeName>
        <fullName evidence="3">50S ribosomal protein L25</fullName>
    </alternativeName>
    <alternativeName>
        <fullName evidence="1">General stress protein CTC</fullName>
    </alternativeName>
</protein>
<sequence>MSETLHLSAETRDRAGKGASRALRREGRTPAVIYGGNEEPVAIHLEEKALVKALGTGHFFNSVVELTVGGQTVRTLPKDVAFHPVTDRPEHADFLRVSKDSVVHVNVPVIFANEEKSPGLKKGGVLNIVRHELELVCAPDAIPDDIVIDVAGYEVGDSIHISAVKLPAGVKSAITDRDFTIATIVAPSSLKSEEGDTTKTDAEG</sequence>
<gene>
    <name evidence="1" type="primary">rplY</name>
    <name evidence="1" type="synonym">ctc</name>
    <name type="ordered locus">Saro_2115</name>
</gene>
<feature type="chain" id="PRO_0000244221" description="Large ribosomal subunit protein bL25">
    <location>
        <begin position="1"/>
        <end position="204"/>
    </location>
</feature>
<feature type="region of interest" description="Disordered" evidence="2">
    <location>
        <begin position="1"/>
        <end position="23"/>
    </location>
</feature>
<keyword id="KW-1185">Reference proteome</keyword>
<keyword id="KW-0687">Ribonucleoprotein</keyword>
<keyword id="KW-0689">Ribosomal protein</keyword>
<keyword id="KW-0694">RNA-binding</keyword>
<keyword id="KW-0699">rRNA-binding</keyword>
<reference key="1">
    <citation type="submission" date="2006-01" db="EMBL/GenBank/DDBJ databases">
        <title>Complete sequence of Novosphingobium aromaticivorans DSM 12444.</title>
        <authorList>
            <consortium name="US DOE Joint Genome Institute"/>
            <person name="Copeland A."/>
            <person name="Lucas S."/>
            <person name="Lapidus A."/>
            <person name="Barry K."/>
            <person name="Detter J.C."/>
            <person name="Glavina T."/>
            <person name="Hammon N."/>
            <person name="Israni S."/>
            <person name="Pitluck S."/>
            <person name="Chain P."/>
            <person name="Malfatti S."/>
            <person name="Shin M."/>
            <person name="Vergez L."/>
            <person name="Schmutz J."/>
            <person name="Larimer F."/>
            <person name="Land M."/>
            <person name="Kyrpides N."/>
            <person name="Ivanova N."/>
            <person name="Fredrickson J."/>
            <person name="Balkwill D."/>
            <person name="Romine M.F."/>
            <person name="Richardson P."/>
        </authorList>
    </citation>
    <scope>NUCLEOTIDE SEQUENCE [LARGE SCALE GENOMIC DNA]</scope>
    <source>
        <strain>ATCC 700278 / DSM 12444 / CCUG 56034 / CIP 105152 / NBRC 16084 / F199</strain>
    </source>
</reference>
<comment type="function">
    <text evidence="1">This is one of the proteins that binds to the 5S RNA in the ribosome where it forms part of the central protuberance.</text>
</comment>
<comment type="subunit">
    <text evidence="1">Part of the 50S ribosomal subunit; part of the 5S rRNA/L5/L18/L25 subcomplex. Contacts the 5S rRNA. Binds to the 5S rRNA independently of L5 and L18.</text>
</comment>
<comment type="similarity">
    <text evidence="1">Belongs to the bacterial ribosomal protein bL25 family. CTC subfamily.</text>
</comment>
<evidence type="ECO:0000255" key="1">
    <source>
        <dbReference type="HAMAP-Rule" id="MF_01334"/>
    </source>
</evidence>
<evidence type="ECO:0000256" key="2">
    <source>
        <dbReference type="SAM" id="MobiDB-lite"/>
    </source>
</evidence>
<evidence type="ECO:0000305" key="3"/>
<organism>
    <name type="scientific">Novosphingobium aromaticivorans (strain ATCC 700278 / DSM 12444 / CCUG 56034 / CIP 105152 / NBRC 16084 / F199)</name>
    <dbReference type="NCBI Taxonomy" id="279238"/>
    <lineage>
        <taxon>Bacteria</taxon>
        <taxon>Pseudomonadati</taxon>
        <taxon>Pseudomonadota</taxon>
        <taxon>Alphaproteobacteria</taxon>
        <taxon>Sphingomonadales</taxon>
        <taxon>Sphingomonadaceae</taxon>
        <taxon>Novosphingobium</taxon>
    </lineage>
</organism>
<accession>Q2G6G9</accession>
<proteinExistence type="inferred from homology"/>
<name>RL25_NOVAD</name>
<dbReference type="EMBL" id="CP000248">
    <property type="protein sequence ID" value="ABD26554.1"/>
    <property type="molecule type" value="Genomic_DNA"/>
</dbReference>
<dbReference type="RefSeq" id="WP_011445763.1">
    <property type="nucleotide sequence ID" value="NC_007794.1"/>
</dbReference>
<dbReference type="SMR" id="Q2G6G9"/>
<dbReference type="STRING" id="279238.Saro_2115"/>
<dbReference type="KEGG" id="nar:Saro_2115"/>
<dbReference type="eggNOG" id="COG1825">
    <property type="taxonomic scope" value="Bacteria"/>
</dbReference>
<dbReference type="HOGENOM" id="CLU_075939_0_0_5"/>
<dbReference type="Proteomes" id="UP000009134">
    <property type="component" value="Chromosome"/>
</dbReference>
<dbReference type="GO" id="GO:0022625">
    <property type="term" value="C:cytosolic large ribosomal subunit"/>
    <property type="evidence" value="ECO:0007669"/>
    <property type="project" value="TreeGrafter"/>
</dbReference>
<dbReference type="GO" id="GO:0008097">
    <property type="term" value="F:5S rRNA binding"/>
    <property type="evidence" value="ECO:0007669"/>
    <property type="project" value="InterPro"/>
</dbReference>
<dbReference type="GO" id="GO:0003735">
    <property type="term" value="F:structural constituent of ribosome"/>
    <property type="evidence" value="ECO:0007669"/>
    <property type="project" value="InterPro"/>
</dbReference>
<dbReference type="GO" id="GO:0006412">
    <property type="term" value="P:translation"/>
    <property type="evidence" value="ECO:0007669"/>
    <property type="project" value="UniProtKB-UniRule"/>
</dbReference>
<dbReference type="CDD" id="cd00495">
    <property type="entry name" value="Ribosomal_L25_TL5_CTC"/>
    <property type="match status" value="1"/>
</dbReference>
<dbReference type="Gene3D" id="2.170.120.20">
    <property type="entry name" value="Ribosomal protein L25, beta domain"/>
    <property type="match status" value="1"/>
</dbReference>
<dbReference type="Gene3D" id="2.40.240.10">
    <property type="entry name" value="Ribosomal Protein L25, Chain P"/>
    <property type="match status" value="1"/>
</dbReference>
<dbReference type="HAMAP" id="MF_01334">
    <property type="entry name" value="Ribosomal_bL25_CTC"/>
    <property type="match status" value="1"/>
</dbReference>
<dbReference type="InterPro" id="IPR020056">
    <property type="entry name" value="Rbsml_bL25/Gln-tRNA_synth_N"/>
</dbReference>
<dbReference type="InterPro" id="IPR011035">
    <property type="entry name" value="Ribosomal_bL25/Gln-tRNA_synth"/>
</dbReference>
<dbReference type="InterPro" id="IPR020057">
    <property type="entry name" value="Ribosomal_bL25_b-dom"/>
</dbReference>
<dbReference type="InterPro" id="IPR037121">
    <property type="entry name" value="Ribosomal_bL25_C"/>
</dbReference>
<dbReference type="InterPro" id="IPR001021">
    <property type="entry name" value="Ribosomal_bL25_long"/>
</dbReference>
<dbReference type="InterPro" id="IPR029751">
    <property type="entry name" value="Ribosomal_L25_dom"/>
</dbReference>
<dbReference type="InterPro" id="IPR020930">
    <property type="entry name" value="Ribosomal_uL5_bac-type"/>
</dbReference>
<dbReference type="NCBIfam" id="TIGR00731">
    <property type="entry name" value="bL25_bact_ctc"/>
    <property type="match status" value="1"/>
</dbReference>
<dbReference type="NCBIfam" id="NF004128">
    <property type="entry name" value="PRK05618.1-2"/>
    <property type="match status" value="1"/>
</dbReference>
<dbReference type="NCBIfam" id="NF004612">
    <property type="entry name" value="PRK05943.1"/>
    <property type="match status" value="1"/>
</dbReference>
<dbReference type="PANTHER" id="PTHR33284">
    <property type="entry name" value="RIBOSOMAL PROTEIN L25/GLN-TRNA SYNTHETASE, ANTI-CODON-BINDING DOMAIN-CONTAINING PROTEIN"/>
    <property type="match status" value="1"/>
</dbReference>
<dbReference type="PANTHER" id="PTHR33284:SF1">
    <property type="entry name" value="RIBOSOMAL PROTEIN L25_GLN-TRNA SYNTHETASE, ANTI-CODON-BINDING DOMAIN-CONTAINING PROTEIN"/>
    <property type="match status" value="1"/>
</dbReference>
<dbReference type="Pfam" id="PF01386">
    <property type="entry name" value="Ribosomal_L25p"/>
    <property type="match status" value="1"/>
</dbReference>
<dbReference type="Pfam" id="PF14693">
    <property type="entry name" value="Ribosomal_TL5_C"/>
    <property type="match status" value="1"/>
</dbReference>
<dbReference type="SUPFAM" id="SSF50715">
    <property type="entry name" value="Ribosomal protein L25-like"/>
    <property type="match status" value="1"/>
</dbReference>